<proteinExistence type="evidence at protein level"/>
<reference evidence="6" key="1">
    <citation type="journal article" date="1994" name="Chromosoma">
        <title>Comparison of the two major ARS elements of the ura4 replication origin region with other ARS elements in the fission yeast, Schizosaccharomyces pombe.</title>
        <authorList>
            <person name="Zhu J."/>
            <person name="Carlson D.L."/>
            <person name="Dubey D.D."/>
            <person name="Sharma K."/>
            <person name="Huberman J.A."/>
        </authorList>
    </citation>
    <scope>NUCLEOTIDE SEQUENCE [GENOMIC DNA]</scope>
    <source>
        <strain>972 / ATCC 24843</strain>
    </source>
</reference>
<reference evidence="7" key="2">
    <citation type="journal article" date="2002" name="Nature">
        <title>The genome sequence of Schizosaccharomyces pombe.</title>
        <authorList>
            <person name="Wood V."/>
            <person name="Gwilliam R."/>
            <person name="Rajandream M.A."/>
            <person name="Lyne M.H."/>
            <person name="Lyne R."/>
            <person name="Stewart A."/>
            <person name="Sgouros J.G."/>
            <person name="Peat N."/>
            <person name="Hayles J."/>
            <person name="Baker S.G."/>
            <person name="Basham D."/>
            <person name="Bowman S."/>
            <person name="Brooks K."/>
            <person name="Brown D."/>
            <person name="Brown S."/>
            <person name="Chillingworth T."/>
            <person name="Churcher C.M."/>
            <person name="Collins M."/>
            <person name="Connor R."/>
            <person name="Cronin A."/>
            <person name="Davis P."/>
            <person name="Feltwell T."/>
            <person name="Fraser A."/>
            <person name="Gentles S."/>
            <person name="Goble A."/>
            <person name="Hamlin N."/>
            <person name="Harris D.E."/>
            <person name="Hidalgo J."/>
            <person name="Hodgson G."/>
            <person name="Holroyd S."/>
            <person name="Hornsby T."/>
            <person name="Howarth S."/>
            <person name="Huckle E.J."/>
            <person name="Hunt S."/>
            <person name="Jagels K."/>
            <person name="James K.D."/>
            <person name="Jones L."/>
            <person name="Jones M."/>
            <person name="Leather S."/>
            <person name="McDonald S."/>
            <person name="McLean J."/>
            <person name="Mooney P."/>
            <person name="Moule S."/>
            <person name="Mungall K.L."/>
            <person name="Murphy L.D."/>
            <person name="Niblett D."/>
            <person name="Odell C."/>
            <person name="Oliver K."/>
            <person name="O'Neil S."/>
            <person name="Pearson D."/>
            <person name="Quail M.A."/>
            <person name="Rabbinowitsch E."/>
            <person name="Rutherford K.M."/>
            <person name="Rutter S."/>
            <person name="Saunders D."/>
            <person name="Seeger K."/>
            <person name="Sharp S."/>
            <person name="Skelton J."/>
            <person name="Simmonds M.N."/>
            <person name="Squares R."/>
            <person name="Squares S."/>
            <person name="Stevens K."/>
            <person name="Taylor K."/>
            <person name="Taylor R.G."/>
            <person name="Tivey A."/>
            <person name="Walsh S.V."/>
            <person name="Warren T."/>
            <person name="Whitehead S."/>
            <person name="Woodward J.R."/>
            <person name="Volckaert G."/>
            <person name="Aert R."/>
            <person name="Robben J."/>
            <person name="Grymonprez B."/>
            <person name="Weltjens I."/>
            <person name="Vanstreels E."/>
            <person name="Rieger M."/>
            <person name="Schaefer M."/>
            <person name="Mueller-Auer S."/>
            <person name="Gabel C."/>
            <person name="Fuchs M."/>
            <person name="Duesterhoeft A."/>
            <person name="Fritzc C."/>
            <person name="Holzer E."/>
            <person name="Moestl D."/>
            <person name="Hilbert H."/>
            <person name="Borzym K."/>
            <person name="Langer I."/>
            <person name="Beck A."/>
            <person name="Lehrach H."/>
            <person name="Reinhardt R."/>
            <person name="Pohl T.M."/>
            <person name="Eger P."/>
            <person name="Zimmermann W."/>
            <person name="Wedler H."/>
            <person name="Wambutt R."/>
            <person name="Purnelle B."/>
            <person name="Goffeau A."/>
            <person name="Cadieu E."/>
            <person name="Dreano S."/>
            <person name="Gloux S."/>
            <person name="Lelaure V."/>
            <person name="Mottier S."/>
            <person name="Galibert F."/>
            <person name="Aves S.J."/>
            <person name="Xiang Z."/>
            <person name="Hunt C."/>
            <person name="Moore K."/>
            <person name="Hurst S.M."/>
            <person name="Lucas M."/>
            <person name="Rochet M."/>
            <person name="Gaillardin C."/>
            <person name="Tallada V.A."/>
            <person name="Garzon A."/>
            <person name="Thode G."/>
            <person name="Daga R.R."/>
            <person name="Cruzado L."/>
            <person name="Jimenez J."/>
            <person name="Sanchez M."/>
            <person name="del Rey F."/>
            <person name="Benito J."/>
            <person name="Dominguez A."/>
            <person name="Revuelta J.L."/>
            <person name="Moreno S."/>
            <person name="Armstrong J."/>
            <person name="Forsburg S.L."/>
            <person name="Cerutti L."/>
            <person name="Lowe T."/>
            <person name="McCombie W.R."/>
            <person name="Paulsen I."/>
            <person name="Potashkin J."/>
            <person name="Shpakovski G.V."/>
            <person name="Ussery D."/>
            <person name="Barrell B.G."/>
            <person name="Nurse P."/>
        </authorList>
    </citation>
    <scope>NUCLEOTIDE SEQUENCE [LARGE SCALE GENOMIC DNA]</scope>
    <source>
        <strain>972 / ATCC 24843</strain>
    </source>
</reference>
<reference evidence="5" key="3">
    <citation type="journal article" date="2006" name="Nat. Biotechnol.">
        <title>ORFeome cloning and global analysis of protein localization in the fission yeast Schizosaccharomyces pombe.</title>
        <authorList>
            <person name="Matsuyama A."/>
            <person name="Arai R."/>
            <person name="Yashiroda Y."/>
            <person name="Shirai A."/>
            <person name="Kamata A."/>
            <person name="Sekido S."/>
            <person name="Kobayashi Y."/>
            <person name="Hashimoto A."/>
            <person name="Hamamoto M."/>
            <person name="Hiraoka Y."/>
            <person name="Horinouchi S."/>
            <person name="Yoshida M."/>
        </authorList>
    </citation>
    <scope>SUBCELLULAR LOCATION [LARGE SCALE ANALYSIS]</scope>
</reference>
<reference evidence="5" key="4">
    <citation type="journal article" date="2008" name="J. Proteome Res.">
        <title>Phosphoproteome analysis of fission yeast.</title>
        <authorList>
            <person name="Wilson-Grady J.T."/>
            <person name="Villen J."/>
            <person name="Gygi S.P."/>
        </authorList>
    </citation>
    <scope>PHOSPHORYLATION [LARGE SCALE ANALYSIS] AT SER-9</scope>
    <scope>IDENTIFICATION BY MASS SPECTROMETRY</scope>
</reference>
<dbReference type="EMBL" id="L25861">
    <property type="protein sequence ID" value="AAC37421.1"/>
    <property type="molecule type" value="Genomic_DNA"/>
</dbReference>
<dbReference type="EMBL" id="Z27236">
    <property type="protein sequence ID" value="CAA81750.1"/>
    <property type="molecule type" value="Genomic_DNA"/>
</dbReference>
<dbReference type="EMBL" id="CU329672">
    <property type="protein sequence ID" value="CAA20912.1"/>
    <property type="molecule type" value="Genomic_DNA"/>
</dbReference>
<dbReference type="PIR" id="S47349">
    <property type="entry name" value="S47349"/>
</dbReference>
<dbReference type="RefSeq" id="NP_587707.1">
    <property type="nucleotide sequence ID" value="NM_001022702.2"/>
</dbReference>
<dbReference type="SMR" id="Q12519"/>
<dbReference type="BioGRID" id="275610">
    <property type="interactions" value="7"/>
</dbReference>
<dbReference type="FunCoup" id="Q12519">
    <property type="interactions" value="70"/>
</dbReference>
<dbReference type="TCDB" id="2.A.1.2.59">
    <property type="family name" value="the major facilitator superfamily (mfs)"/>
</dbReference>
<dbReference type="iPTMnet" id="Q12519"/>
<dbReference type="PaxDb" id="4896-SPCC330.07c.1"/>
<dbReference type="EnsemblFungi" id="SPCC330.07c.1">
    <property type="protein sequence ID" value="SPCC330.07c.1:pep"/>
    <property type="gene ID" value="SPCC330.07c"/>
</dbReference>
<dbReference type="KEGG" id="spo:2539037"/>
<dbReference type="PomBase" id="SPCC330.07c"/>
<dbReference type="VEuPathDB" id="FungiDB:SPCC330.07c"/>
<dbReference type="eggNOG" id="KOG2325">
    <property type="taxonomic scope" value="Eukaryota"/>
</dbReference>
<dbReference type="HOGENOM" id="CLU_042172_0_0_1"/>
<dbReference type="InParanoid" id="Q12519"/>
<dbReference type="OMA" id="QTKQGNH"/>
<dbReference type="PhylomeDB" id="Q12519"/>
<dbReference type="PRO" id="PR:Q12519"/>
<dbReference type="Proteomes" id="UP000002485">
    <property type="component" value="Chromosome III"/>
</dbReference>
<dbReference type="GO" id="GO:0032153">
    <property type="term" value="C:cell division site"/>
    <property type="evidence" value="ECO:0007005"/>
    <property type="project" value="PomBase"/>
</dbReference>
<dbReference type="GO" id="GO:0051286">
    <property type="term" value="C:cell tip"/>
    <property type="evidence" value="ECO:0007005"/>
    <property type="project" value="PomBase"/>
</dbReference>
<dbReference type="GO" id="GO:0005794">
    <property type="term" value="C:Golgi apparatus"/>
    <property type="evidence" value="ECO:0007005"/>
    <property type="project" value="PomBase"/>
</dbReference>
<dbReference type="GO" id="GO:0016020">
    <property type="term" value="C:membrane"/>
    <property type="evidence" value="ECO:0000318"/>
    <property type="project" value="GO_Central"/>
</dbReference>
<dbReference type="GO" id="GO:0022857">
    <property type="term" value="F:transmembrane transporter activity"/>
    <property type="evidence" value="ECO:0000318"/>
    <property type="project" value="GO_Central"/>
</dbReference>
<dbReference type="CDD" id="cd17326">
    <property type="entry name" value="MFS_MFSD8"/>
    <property type="match status" value="1"/>
</dbReference>
<dbReference type="FunFam" id="1.20.1250.20:FF:001084">
    <property type="entry name" value="Uncharacterized MFS-type transporter C330.07c"/>
    <property type="match status" value="1"/>
</dbReference>
<dbReference type="Gene3D" id="1.20.1250.20">
    <property type="entry name" value="MFS general substrate transporter like domains"/>
    <property type="match status" value="1"/>
</dbReference>
<dbReference type="InterPro" id="IPR011701">
    <property type="entry name" value="MFS"/>
</dbReference>
<dbReference type="InterPro" id="IPR051068">
    <property type="entry name" value="MFS_Domain-Containing_Protein"/>
</dbReference>
<dbReference type="InterPro" id="IPR036259">
    <property type="entry name" value="MFS_trans_sf"/>
</dbReference>
<dbReference type="PANTHER" id="PTHR23510">
    <property type="entry name" value="INNER MEMBRANE TRANSPORT PROTEIN YAJR"/>
    <property type="match status" value="1"/>
</dbReference>
<dbReference type="PANTHER" id="PTHR23510:SF76">
    <property type="entry name" value="MEMBRANE TRANSPORTER"/>
    <property type="match status" value="1"/>
</dbReference>
<dbReference type="Pfam" id="PF07690">
    <property type="entry name" value="MFS_1"/>
    <property type="match status" value="1"/>
</dbReference>
<dbReference type="SUPFAM" id="SSF103473">
    <property type="entry name" value="MFS general substrate transporter"/>
    <property type="match status" value="1"/>
</dbReference>
<comment type="subcellular location">
    <subcellularLocation>
        <location evidence="3">Golgi apparatus</location>
    </subcellularLocation>
    <subcellularLocation>
        <location evidence="1">Membrane</location>
        <topology evidence="1">Multi-pass membrane protein</topology>
    </subcellularLocation>
    <text evidence="1 3">Barrier septum. Cell tip.</text>
</comment>
<comment type="similarity">
    <text evidence="1">Belongs to the major facilitator superfamily.</text>
</comment>
<name>YJ87_SCHPO</name>
<organism>
    <name type="scientific">Schizosaccharomyces pombe (strain 972 / ATCC 24843)</name>
    <name type="common">Fission yeast</name>
    <dbReference type="NCBI Taxonomy" id="284812"/>
    <lineage>
        <taxon>Eukaryota</taxon>
        <taxon>Fungi</taxon>
        <taxon>Dikarya</taxon>
        <taxon>Ascomycota</taxon>
        <taxon>Taphrinomycotina</taxon>
        <taxon>Schizosaccharomycetes</taxon>
        <taxon>Schizosaccharomycetales</taxon>
        <taxon>Schizosaccharomycetaceae</taxon>
        <taxon>Schizosaccharomyces</taxon>
    </lineage>
</organism>
<protein>
    <recommendedName>
        <fullName>Uncharacterized MFS-type transporter C330.07c</fullName>
    </recommendedName>
</protein>
<keyword id="KW-0333">Golgi apparatus</keyword>
<keyword id="KW-0472">Membrane</keyword>
<keyword id="KW-0597">Phosphoprotein</keyword>
<keyword id="KW-1185">Reference proteome</keyword>
<keyword id="KW-0812">Transmembrane</keyword>
<keyword id="KW-1133">Transmembrane helix</keyword>
<keyword id="KW-0813">Transport</keyword>
<gene>
    <name type="ORF">SPCC330.07c</name>
</gene>
<feature type="chain" id="PRO_0000372716" description="Uncharacterized MFS-type transporter C330.07c">
    <location>
        <begin position="1"/>
        <end position="500"/>
    </location>
</feature>
<feature type="transmembrane region" description="Helical" evidence="1">
    <location>
        <begin position="87"/>
        <end position="107"/>
    </location>
</feature>
<feature type="transmembrane region" description="Helical" evidence="1">
    <location>
        <begin position="126"/>
        <end position="146"/>
    </location>
</feature>
<feature type="transmembrane region" description="Helical" evidence="1">
    <location>
        <begin position="156"/>
        <end position="176"/>
    </location>
</feature>
<feature type="transmembrane region" description="Helical" evidence="1">
    <location>
        <begin position="183"/>
        <end position="203"/>
    </location>
</feature>
<feature type="transmembrane region" description="Helical" evidence="1">
    <location>
        <begin position="225"/>
        <end position="245"/>
    </location>
</feature>
<feature type="transmembrane region" description="Helical" evidence="1">
    <location>
        <begin position="261"/>
        <end position="281"/>
    </location>
</feature>
<feature type="transmembrane region" description="Helical" evidence="1">
    <location>
        <begin position="312"/>
        <end position="332"/>
    </location>
</feature>
<feature type="transmembrane region" description="Helical" evidence="1">
    <location>
        <begin position="351"/>
        <end position="371"/>
    </location>
</feature>
<feature type="transmembrane region" description="Helical" evidence="1">
    <location>
        <begin position="380"/>
        <end position="400"/>
    </location>
</feature>
<feature type="transmembrane region" description="Helical" evidence="1">
    <location>
        <begin position="408"/>
        <end position="428"/>
    </location>
</feature>
<feature type="transmembrane region" description="Helical" evidence="1">
    <location>
        <begin position="445"/>
        <end position="465"/>
    </location>
</feature>
<feature type="transmembrane region" description="Helical" evidence="1">
    <location>
        <begin position="471"/>
        <end position="491"/>
    </location>
</feature>
<feature type="region of interest" description="Disordered" evidence="2">
    <location>
        <begin position="1"/>
        <end position="23"/>
    </location>
</feature>
<feature type="compositionally biased region" description="Low complexity" evidence="2">
    <location>
        <begin position="1"/>
        <end position="13"/>
    </location>
</feature>
<feature type="modified residue" description="Phosphoserine" evidence="4">
    <location>
        <position position="9"/>
    </location>
</feature>
<accession>Q12519</accession>
<evidence type="ECO:0000255" key="1"/>
<evidence type="ECO:0000256" key="2">
    <source>
        <dbReference type="SAM" id="MobiDB-lite"/>
    </source>
</evidence>
<evidence type="ECO:0000269" key="3">
    <source>
    </source>
</evidence>
<evidence type="ECO:0000269" key="4">
    <source>
    </source>
</evidence>
<evidence type="ECO:0000305" key="5"/>
<evidence type="ECO:0000312" key="6">
    <source>
        <dbReference type="EMBL" id="AAC37421.1"/>
    </source>
</evidence>
<evidence type="ECO:0000312" key="7">
    <source>
        <dbReference type="EMBL" id="CAA20912.1"/>
    </source>
</evidence>
<sequence>MEPSQRSGSFSSISRRRSRVDSRPTYFKVTSKDLGFVDQVSEEYEFYTYPKKASEVESVTETFQSNRSSLVPTYPVDENANKLPPKVSIAFILINSLMSDMSLAVALPTSASYTQSLGGTNAFSGLVIGIPTLISLIFLYPMLCFANPKSANGYTLYFRPMVVSSFAHIFGHLLYCMAYRANWIYLILIGRMLNGIGFTTFLYHKKYTTDKLLVGQNRRTFLATMNILAQTLGFMAGPFLGGILAKATIHSKNAVWNQYTVASWVMLFMWFFYMLTIIFFFKEVTADKSEKVSQQKENDDEDRPKLSWKHKFLLFFLAEVAFIAYFTVNGYQASISIYTGKLYNYDAFQSGNFIALSALIVAPFILASSFLSRWLEDRHIMLGGLFLGILAVAIHLVLDAVHKLPMQVYFFLYSLMIYGYSIGSAPLISLSSKQLHPRHHNTASIVVQVGVSLSNTFGSICGGAIYNITTVGFISLCLGLAAVVYMQLIFMWGSLKCKTH</sequence>